<keyword id="KW-0963">Cytoplasm</keyword>
<keyword id="KW-0275">Fatty acid biosynthesis</keyword>
<keyword id="KW-0276">Fatty acid metabolism</keyword>
<keyword id="KW-0444">Lipid biosynthesis</keyword>
<keyword id="KW-0443">Lipid metabolism</keyword>
<keyword id="KW-0596">Phosphopantetheine</keyword>
<keyword id="KW-0597">Phosphoprotein</keyword>
<dbReference type="EMBL" id="CP001197">
    <property type="protein sequence ID" value="ACL10036.1"/>
    <property type="molecule type" value="Genomic_DNA"/>
</dbReference>
<dbReference type="SMR" id="B8DJF9"/>
<dbReference type="STRING" id="883.DvMF_3099"/>
<dbReference type="KEGG" id="dvm:DvMF_3099"/>
<dbReference type="eggNOG" id="COG0236">
    <property type="taxonomic scope" value="Bacteria"/>
</dbReference>
<dbReference type="HOGENOM" id="CLU_108696_5_1_7"/>
<dbReference type="OrthoDB" id="9804551at2"/>
<dbReference type="UniPathway" id="UPA00094"/>
<dbReference type="GO" id="GO:0005829">
    <property type="term" value="C:cytosol"/>
    <property type="evidence" value="ECO:0007669"/>
    <property type="project" value="TreeGrafter"/>
</dbReference>
<dbReference type="GO" id="GO:0016020">
    <property type="term" value="C:membrane"/>
    <property type="evidence" value="ECO:0007669"/>
    <property type="project" value="GOC"/>
</dbReference>
<dbReference type="GO" id="GO:0000035">
    <property type="term" value="F:acyl binding"/>
    <property type="evidence" value="ECO:0007669"/>
    <property type="project" value="TreeGrafter"/>
</dbReference>
<dbReference type="GO" id="GO:0000036">
    <property type="term" value="F:acyl carrier activity"/>
    <property type="evidence" value="ECO:0007669"/>
    <property type="project" value="UniProtKB-UniRule"/>
</dbReference>
<dbReference type="GO" id="GO:0009245">
    <property type="term" value="P:lipid A biosynthetic process"/>
    <property type="evidence" value="ECO:0007669"/>
    <property type="project" value="TreeGrafter"/>
</dbReference>
<dbReference type="Gene3D" id="1.10.1200.10">
    <property type="entry name" value="ACP-like"/>
    <property type="match status" value="1"/>
</dbReference>
<dbReference type="HAMAP" id="MF_01217">
    <property type="entry name" value="Acyl_carrier"/>
    <property type="match status" value="1"/>
</dbReference>
<dbReference type="InterPro" id="IPR003231">
    <property type="entry name" value="ACP"/>
</dbReference>
<dbReference type="InterPro" id="IPR036736">
    <property type="entry name" value="ACP-like_sf"/>
</dbReference>
<dbReference type="InterPro" id="IPR009081">
    <property type="entry name" value="PP-bd_ACP"/>
</dbReference>
<dbReference type="InterPro" id="IPR006162">
    <property type="entry name" value="Ppantetheine_attach_site"/>
</dbReference>
<dbReference type="NCBIfam" id="TIGR00517">
    <property type="entry name" value="acyl_carrier"/>
    <property type="match status" value="1"/>
</dbReference>
<dbReference type="NCBIfam" id="NF002148">
    <property type="entry name" value="PRK00982.1-2"/>
    <property type="match status" value="1"/>
</dbReference>
<dbReference type="NCBIfam" id="NF002149">
    <property type="entry name" value="PRK00982.1-3"/>
    <property type="match status" value="1"/>
</dbReference>
<dbReference type="NCBIfam" id="NF002150">
    <property type="entry name" value="PRK00982.1-4"/>
    <property type="match status" value="1"/>
</dbReference>
<dbReference type="NCBIfam" id="NF002151">
    <property type="entry name" value="PRK00982.1-5"/>
    <property type="match status" value="1"/>
</dbReference>
<dbReference type="PANTHER" id="PTHR20863">
    <property type="entry name" value="ACYL CARRIER PROTEIN"/>
    <property type="match status" value="1"/>
</dbReference>
<dbReference type="PANTHER" id="PTHR20863:SF76">
    <property type="entry name" value="CARRIER DOMAIN-CONTAINING PROTEIN"/>
    <property type="match status" value="1"/>
</dbReference>
<dbReference type="Pfam" id="PF00550">
    <property type="entry name" value="PP-binding"/>
    <property type="match status" value="1"/>
</dbReference>
<dbReference type="SUPFAM" id="SSF47336">
    <property type="entry name" value="ACP-like"/>
    <property type="match status" value="1"/>
</dbReference>
<dbReference type="PROSITE" id="PS50075">
    <property type="entry name" value="CARRIER"/>
    <property type="match status" value="1"/>
</dbReference>
<dbReference type="PROSITE" id="PS00012">
    <property type="entry name" value="PHOSPHOPANTETHEINE"/>
    <property type="match status" value="1"/>
</dbReference>
<gene>
    <name evidence="1" type="primary">acpP</name>
    <name type="ordered locus">DvMF_3099</name>
</gene>
<reference key="1">
    <citation type="submission" date="2008-10" db="EMBL/GenBank/DDBJ databases">
        <title>Complete sequence of Desulfovibrio vulgaris str. 'Miyazaki F'.</title>
        <authorList>
            <person name="Lucas S."/>
            <person name="Copeland A."/>
            <person name="Lapidus A."/>
            <person name="Glavina del Rio T."/>
            <person name="Dalin E."/>
            <person name="Tice H."/>
            <person name="Bruce D."/>
            <person name="Goodwin L."/>
            <person name="Pitluck S."/>
            <person name="Sims D."/>
            <person name="Brettin T."/>
            <person name="Detter J.C."/>
            <person name="Han C."/>
            <person name="Larimer F."/>
            <person name="Land M."/>
            <person name="Hauser L."/>
            <person name="Kyrpides N."/>
            <person name="Mikhailova N."/>
            <person name="Hazen T.C."/>
            <person name="Richardson P."/>
        </authorList>
    </citation>
    <scope>NUCLEOTIDE SEQUENCE [LARGE SCALE GENOMIC DNA]</scope>
    <source>
        <strain>DSM 19637 / Miyazaki F</strain>
    </source>
</reference>
<organism>
    <name type="scientific">Nitratidesulfovibrio vulgaris (strain DSM 19637 / Miyazaki F)</name>
    <name type="common">Desulfovibrio vulgaris</name>
    <dbReference type="NCBI Taxonomy" id="883"/>
    <lineage>
        <taxon>Bacteria</taxon>
        <taxon>Pseudomonadati</taxon>
        <taxon>Thermodesulfobacteriota</taxon>
        <taxon>Desulfovibrionia</taxon>
        <taxon>Desulfovibrionales</taxon>
        <taxon>Desulfovibrionaceae</taxon>
        <taxon>Nitratidesulfovibrio</taxon>
    </lineage>
</organism>
<evidence type="ECO:0000255" key="1">
    <source>
        <dbReference type="HAMAP-Rule" id="MF_01217"/>
    </source>
</evidence>
<evidence type="ECO:0000255" key="2">
    <source>
        <dbReference type="PROSITE-ProRule" id="PRU00258"/>
    </source>
</evidence>
<comment type="function">
    <text evidence="1">Carrier of the growing fatty acid chain in fatty acid biosynthesis.</text>
</comment>
<comment type="pathway">
    <text evidence="1">Lipid metabolism; fatty acid biosynthesis.</text>
</comment>
<comment type="subcellular location">
    <subcellularLocation>
        <location evidence="1">Cytoplasm</location>
    </subcellularLocation>
</comment>
<comment type="PTM">
    <text evidence="1">4'-phosphopantetheine is transferred from CoA to a specific serine of apo-ACP by AcpS. This modification is essential for activity because fatty acids are bound in thioester linkage to the sulfhydryl of the prosthetic group.</text>
</comment>
<comment type="similarity">
    <text evidence="1">Belongs to the acyl carrier protein (ACP) family.</text>
</comment>
<sequence>MSVEEKISKIIMDQLGVSAEEVKPEASFVEDLGADSLDLTELIMAMEEEFGIEIDDDDAQKILKVQDAIAYIKNKQ</sequence>
<name>ACP_NITV9</name>
<proteinExistence type="inferred from homology"/>
<accession>B8DJF9</accession>
<feature type="chain" id="PRO_1000139020" description="Acyl carrier protein">
    <location>
        <begin position="1"/>
        <end position="76"/>
    </location>
</feature>
<feature type="domain" description="Carrier" evidence="2">
    <location>
        <begin position="1"/>
        <end position="76"/>
    </location>
</feature>
<feature type="modified residue" description="O-(pantetheine 4'-phosphoryl)serine" evidence="2">
    <location>
        <position position="36"/>
    </location>
</feature>
<protein>
    <recommendedName>
        <fullName evidence="1">Acyl carrier protein</fullName>
        <shortName evidence="1">ACP</shortName>
    </recommendedName>
</protein>